<gene>
    <name type="ordered locus">SMU_1789c</name>
</gene>
<organism>
    <name type="scientific">Streptococcus mutans serotype c (strain ATCC 700610 / UA159)</name>
    <dbReference type="NCBI Taxonomy" id="210007"/>
    <lineage>
        <taxon>Bacteria</taxon>
        <taxon>Bacillati</taxon>
        <taxon>Bacillota</taxon>
        <taxon>Bacilli</taxon>
        <taxon>Lactobacillales</taxon>
        <taxon>Streptococcaceae</taxon>
        <taxon>Streptococcus</taxon>
    </lineage>
</organism>
<keyword id="KW-0963">Cytoplasm</keyword>
<keyword id="KW-0238">DNA-binding</keyword>
<keyword id="KW-1185">Reference proteome</keyword>
<keyword id="KW-0804">Transcription</keyword>
<keyword id="KW-0805">Transcription regulation</keyword>
<evidence type="ECO:0000255" key="1">
    <source>
        <dbReference type="HAMAP-Rule" id="MF_00918"/>
    </source>
</evidence>
<reference key="1">
    <citation type="journal article" date="2002" name="Proc. Natl. Acad. Sci. U.S.A.">
        <title>Genome sequence of Streptococcus mutans UA159, a cariogenic dental pathogen.</title>
        <authorList>
            <person name="Ajdic D.J."/>
            <person name="McShan W.M."/>
            <person name="McLaughlin R.E."/>
            <person name="Savic G."/>
            <person name="Chang J."/>
            <person name="Carson M.B."/>
            <person name="Primeaux C."/>
            <person name="Tian R."/>
            <person name="Kenton S."/>
            <person name="Jia H.G."/>
            <person name="Lin S.P."/>
            <person name="Qian Y."/>
            <person name="Li S."/>
            <person name="Zhu H."/>
            <person name="Najar F.Z."/>
            <person name="Lai H."/>
            <person name="White J."/>
            <person name="Roe B.A."/>
            <person name="Ferretti J.J."/>
        </authorList>
    </citation>
    <scope>NUCLEOTIDE SEQUENCE [LARGE SCALE GENOMIC DNA]</scope>
    <source>
        <strain>ATCC 700610 / UA159</strain>
    </source>
</reference>
<comment type="subcellular location">
    <subcellularLocation>
        <location evidence="1">Cytoplasm</location>
    </subcellularLocation>
</comment>
<comment type="similarity">
    <text evidence="1">Belongs to the TACO1 family. YeeN subfamily.</text>
</comment>
<sequence>MGRKWANIVAKKTAKDGANSKVYAKFGVEIYVAAKQGEPDPESNSALKFVLERAKQAQVPKHVIDKAIDKAKGNTDETFVEGRYEGFGPNGSMIIVDTLTSNVNRTAANLRTAFGKNGGNMGAAGSVSYMFDKKGVIVFAGDDADSIFEQLLEADIDVEDVEAEDGSVTVYTAPTDLHRGIEALRAGGVAEFQVTELEMIPQSEVTLEGEDLETFEKLIDALEDDDDVQKVYHNVDGL</sequence>
<dbReference type="EMBL" id="AE014133">
    <property type="protein sequence ID" value="AAN59416.1"/>
    <property type="molecule type" value="Genomic_DNA"/>
</dbReference>
<dbReference type="RefSeq" id="NP_722110.1">
    <property type="nucleotide sequence ID" value="NC_004350.2"/>
</dbReference>
<dbReference type="RefSeq" id="WP_002263515.1">
    <property type="nucleotide sequence ID" value="NC_004350.2"/>
</dbReference>
<dbReference type="SMR" id="Q8DSJ4"/>
<dbReference type="STRING" id="210007.SMU_1789c"/>
<dbReference type="KEGG" id="smu:SMU_1789c"/>
<dbReference type="PATRIC" id="fig|210007.7.peg.1597"/>
<dbReference type="eggNOG" id="COG0217">
    <property type="taxonomic scope" value="Bacteria"/>
</dbReference>
<dbReference type="HOGENOM" id="CLU_062974_2_0_9"/>
<dbReference type="OrthoDB" id="9781053at2"/>
<dbReference type="PhylomeDB" id="Q8DSJ4"/>
<dbReference type="Proteomes" id="UP000002512">
    <property type="component" value="Chromosome"/>
</dbReference>
<dbReference type="GO" id="GO:0005829">
    <property type="term" value="C:cytosol"/>
    <property type="evidence" value="ECO:0007669"/>
    <property type="project" value="TreeGrafter"/>
</dbReference>
<dbReference type="GO" id="GO:0003677">
    <property type="term" value="F:DNA binding"/>
    <property type="evidence" value="ECO:0007669"/>
    <property type="project" value="UniProtKB-UniRule"/>
</dbReference>
<dbReference type="GO" id="GO:0006355">
    <property type="term" value="P:regulation of DNA-templated transcription"/>
    <property type="evidence" value="ECO:0007669"/>
    <property type="project" value="UniProtKB-UniRule"/>
</dbReference>
<dbReference type="FunFam" id="1.10.10.200:FF:000003">
    <property type="entry name" value="Probable transcriptional regulatory protein YeeN"/>
    <property type="match status" value="1"/>
</dbReference>
<dbReference type="Gene3D" id="1.10.10.200">
    <property type="match status" value="1"/>
</dbReference>
<dbReference type="Gene3D" id="3.30.70.980">
    <property type="match status" value="2"/>
</dbReference>
<dbReference type="HAMAP" id="MF_00693">
    <property type="entry name" value="Transcrip_reg_TACO1"/>
    <property type="match status" value="1"/>
</dbReference>
<dbReference type="HAMAP" id="MF_00918">
    <property type="entry name" value="Transcrip_reg_TACO1_YeeN"/>
    <property type="match status" value="1"/>
</dbReference>
<dbReference type="InterPro" id="IPR017856">
    <property type="entry name" value="Integrase-like_N"/>
</dbReference>
<dbReference type="InterPro" id="IPR048300">
    <property type="entry name" value="TACO1_YebC-like_2nd/3rd_dom"/>
</dbReference>
<dbReference type="InterPro" id="IPR049083">
    <property type="entry name" value="TACO1_YebC_N"/>
</dbReference>
<dbReference type="InterPro" id="IPR002876">
    <property type="entry name" value="Transcrip_reg_TACO1-like"/>
</dbReference>
<dbReference type="InterPro" id="IPR026564">
    <property type="entry name" value="Transcrip_reg_TACO1-like_dom3"/>
</dbReference>
<dbReference type="InterPro" id="IPR026562">
    <property type="entry name" value="Transcrip_reg_TACO1_YeeN"/>
</dbReference>
<dbReference type="InterPro" id="IPR029072">
    <property type="entry name" value="YebC-like"/>
</dbReference>
<dbReference type="NCBIfam" id="NF001030">
    <property type="entry name" value="PRK00110.1"/>
    <property type="match status" value="1"/>
</dbReference>
<dbReference type="NCBIfam" id="NF009044">
    <property type="entry name" value="PRK12378.1"/>
    <property type="match status" value="1"/>
</dbReference>
<dbReference type="NCBIfam" id="TIGR01033">
    <property type="entry name" value="YebC/PmpR family DNA-binding transcriptional regulator"/>
    <property type="match status" value="1"/>
</dbReference>
<dbReference type="PANTHER" id="PTHR12532">
    <property type="entry name" value="TRANSLATIONAL ACTIVATOR OF CYTOCHROME C OXIDASE 1"/>
    <property type="match status" value="1"/>
</dbReference>
<dbReference type="PANTHER" id="PTHR12532:SF0">
    <property type="entry name" value="TRANSLATIONAL ACTIVATOR OF CYTOCHROME C OXIDASE 1"/>
    <property type="match status" value="1"/>
</dbReference>
<dbReference type="Pfam" id="PF20772">
    <property type="entry name" value="TACO1_YebC_N"/>
    <property type="match status" value="1"/>
</dbReference>
<dbReference type="Pfam" id="PF01709">
    <property type="entry name" value="Transcrip_reg"/>
    <property type="match status" value="1"/>
</dbReference>
<dbReference type="SUPFAM" id="SSF75625">
    <property type="entry name" value="YebC-like"/>
    <property type="match status" value="1"/>
</dbReference>
<accession>Q8DSJ4</accession>
<proteinExistence type="inferred from homology"/>
<feature type="chain" id="PRO_0000175903" description="Probable transcriptional regulatory protein SMU_1789c">
    <location>
        <begin position="1"/>
        <end position="238"/>
    </location>
</feature>
<protein>
    <recommendedName>
        <fullName evidence="1">Probable transcriptional regulatory protein SMU_1789c</fullName>
    </recommendedName>
</protein>
<name>Y1789_STRMU</name>